<protein>
    <recommendedName>
        <fullName evidence="1">ATP synthase gamma chain</fullName>
    </recommendedName>
    <alternativeName>
        <fullName evidence="1">ATP synthase F1 sector gamma subunit</fullName>
    </alternativeName>
    <alternativeName>
        <fullName evidence="1">F-ATPase gamma subunit</fullName>
    </alternativeName>
</protein>
<organism>
    <name type="scientific">Bacillus caldotenax</name>
    <dbReference type="NCBI Taxonomy" id="1395"/>
    <lineage>
        <taxon>Bacteria</taxon>
        <taxon>Bacillati</taxon>
        <taxon>Bacillota</taxon>
        <taxon>Bacilli</taxon>
        <taxon>Bacillales</taxon>
        <taxon>Anoxybacillaceae</taxon>
        <taxon>Geobacillus</taxon>
        <taxon>Geobacillus thermoleovorans group</taxon>
    </lineage>
</organism>
<comment type="function">
    <text evidence="1">Produces ATP from ADP in the presence of a proton gradient across the membrane. The gamma chain is believed to be important in regulating ATPase activity and the flow of protons through the CF(0) complex.</text>
</comment>
<comment type="subunit">
    <text evidence="1">F-type ATPases have 2 components, CF(1) - the catalytic core - and CF(0) - the membrane proton channel. CF(1) has five subunits: alpha(3), beta(3), gamma(1), delta(1), epsilon(1). CF(0) has three main subunits: a, b and c.</text>
</comment>
<comment type="subcellular location">
    <subcellularLocation>
        <location evidence="1">Cell membrane</location>
        <topology evidence="1">Peripheral membrane protein</topology>
    </subcellularLocation>
</comment>
<comment type="similarity">
    <text evidence="1">Belongs to the ATPase gamma chain family.</text>
</comment>
<keyword id="KW-0066">ATP synthesis</keyword>
<keyword id="KW-1003">Cell membrane</keyword>
<keyword id="KW-0139">CF(1)</keyword>
<keyword id="KW-0375">Hydrogen ion transport</keyword>
<keyword id="KW-0406">Ion transport</keyword>
<keyword id="KW-0472">Membrane</keyword>
<keyword id="KW-0813">Transport</keyword>
<feature type="chain" id="PRO_0000073224" description="ATP synthase gamma chain">
    <location>
        <begin position="1"/>
        <end position="287"/>
    </location>
</feature>
<dbReference type="EMBL" id="D38058">
    <property type="protein sequence ID" value="BAA07247.1"/>
    <property type="molecule type" value="Genomic_DNA"/>
</dbReference>
<dbReference type="SMR" id="P41010"/>
<dbReference type="GO" id="GO:0005886">
    <property type="term" value="C:plasma membrane"/>
    <property type="evidence" value="ECO:0007669"/>
    <property type="project" value="UniProtKB-SubCell"/>
</dbReference>
<dbReference type="GO" id="GO:0045259">
    <property type="term" value="C:proton-transporting ATP synthase complex"/>
    <property type="evidence" value="ECO:0007669"/>
    <property type="project" value="UniProtKB-KW"/>
</dbReference>
<dbReference type="GO" id="GO:0005524">
    <property type="term" value="F:ATP binding"/>
    <property type="evidence" value="ECO:0007669"/>
    <property type="project" value="UniProtKB-UniRule"/>
</dbReference>
<dbReference type="GO" id="GO:0046933">
    <property type="term" value="F:proton-transporting ATP synthase activity, rotational mechanism"/>
    <property type="evidence" value="ECO:0007669"/>
    <property type="project" value="UniProtKB-UniRule"/>
</dbReference>
<dbReference type="GO" id="GO:0042777">
    <property type="term" value="P:proton motive force-driven plasma membrane ATP synthesis"/>
    <property type="evidence" value="ECO:0007669"/>
    <property type="project" value="UniProtKB-UniRule"/>
</dbReference>
<dbReference type="CDD" id="cd12151">
    <property type="entry name" value="F1-ATPase_gamma"/>
    <property type="match status" value="1"/>
</dbReference>
<dbReference type="FunFam" id="3.40.1380.10:FF:000002">
    <property type="entry name" value="ATP synthase gamma chain"/>
    <property type="match status" value="1"/>
</dbReference>
<dbReference type="Gene3D" id="3.40.1380.10">
    <property type="match status" value="1"/>
</dbReference>
<dbReference type="Gene3D" id="1.10.287.80">
    <property type="entry name" value="ATP synthase, gamma subunit, helix hairpin domain"/>
    <property type="match status" value="1"/>
</dbReference>
<dbReference type="HAMAP" id="MF_00815">
    <property type="entry name" value="ATP_synth_gamma_bact"/>
    <property type="match status" value="1"/>
</dbReference>
<dbReference type="InterPro" id="IPR035968">
    <property type="entry name" value="ATP_synth_F1_ATPase_gsu"/>
</dbReference>
<dbReference type="InterPro" id="IPR000131">
    <property type="entry name" value="ATP_synth_F1_gsu"/>
</dbReference>
<dbReference type="NCBIfam" id="TIGR01146">
    <property type="entry name" value="ATPsyn_F1gamma"/>
    <property type="match status" value="1"/>
</dbReference>
<dbReference type="PANTHER" id="PTHR11693">
    <property type="entry name" value="ATP SYNTHASE GAMMA CHAIN"/>
    <property type="match status" value="1"/>
</dbReference>
<dbReference type="PANTHER" id="PTHR11693:SF22">
    <property type="entry name" value="ATP SYNTHASE SUBUNIT GAMMA, MITOCHONDRIAL"/>
    <property type="match status" value="1"/>
</dbReference>
<dbReference type="Pfam" id="PF00231">
    <property type="entry name" value="ATP-synt"/>
    <property type="match status" value="1"/>
</dbReference>
<dbReference type="PRINTS" id="PR00126">
    <property type="entry name" value="ATPASEGAMMA"/>
</dbReference>
<dbReference type="SUPFAM" id="SSF52943">
    <property type="entry name" value="ATP synthase (F1-ATPase), gamma subunit"/>
    <property type="match status" value="1"/>
</dbReference>
<proteinExistence type="inferred from homology"/>
<gene>
    <name evidence="1" type="primary">atpG</name>
</gene>
<accession>P41010</accession>
<name>ATPG_BACCA</name>
<reference key="1">
    <citation type="submission" date="1994-08" db="EMBL/GenBank/DDBJ databases">
        <authorList>
            <person name="Ishizuka M."/>
        </authorList>
    </citation>
    <scope>NUCLEOTIDE SEQUENCE [GENOMIC DNA]</scope>
</reference>
<sequence length="287" mass="32343">MKPLASLRDIKTRINATKKTSQITKAMEMVSTSKLNRAEKREIVRPYMEKIQEVVAMSASAARSHPMLVSRPVKKTGYLVITSDRGLAGAYNSNVVRLVYPKRSKNAMLPPDEIAIIVIGRVGLSFFRKRNMPVILDITRLPDQPSFADIKEIARKTVGLFADGTFDELYMYYNHYVSAIQQEVTERKLLPLTDFLAENKQRTVYEFEPSQEEILDVLLPQYAESLIYGALLDAKASEHAARMTAMKNATDNANDVIRTLTLSYNRARQAAITQEITEIVAGRNALQ</sequence>
<evidence type="ECO:0000255" key="1">
    <source>
        <dbReference type="HAMAP-Rule" id="MF_00815"/>
    </source>
</evidence>